<accession>P9WPU8</accession>
<accession>L0T696</accession>
<accession>P63671</accession>
<accession>Q10597</accession>
<protein>
    <recommendedName>
        <fullName evidence="1">ATP synthase gamma chain</fullName>
    </recommendedName>
    <alternativeName>
        <fullName evidence="1">ATP synthase F1 sector gamma subunit</fullName>
    </alternativeName>
    <alternativeName>
        <fullName evidence="1">F-ATPase gamma subunit</fullName>
    </alternativeName>
</protein>
<gene>
    <name evidence="1" type="primary">atpG</name>
    <name type="ordered locus">MT1349</name>
</gene>
<dbReference type="EMBL" id="AE000516">
    <property type="protein sequence ID" value="AAK45611.1"/>
    <property type="molecule type" value="Genomic_DNA"/>
</dbReference>
<dbReference type="PIR" id="A70775">
    <property type="entry name" value="A70775"/>
</dbReference>
<dbReference type="RefSeq" id="WP_003898819.1">
    <property type="nucleotide sequence ID" value="NZ_KK341227.1"/>
</dbReference>
<dbReference type="SMR" id="P9WPU8"/>
<dbReference type="KEGG" id="mtc:MT1349"/>
<dbReference type="PATRIC" id="fig|83331.31.peg.1455"/>
<dbReference type="HOGENOM" id="CLU_050669_0_0_11"/>
<dbReference type="Proteomes" id="UP000001020">
    <property type="component" value="Chromosome"/>
</dbReference>
<dbReference type="GO" id="GO:0005886">
    <property type="term" value="C:plasma membrane"/>
    <property type="evidence" value="ECO:0007669"/>
    <property type="project" value="UniProtKB-SubCell"/>
</dbReference>
<dbReference type="GO" id="GO:0045259">
    <property type="term" value="C:proton-transporting ATP synthase complex"/>
    <property type="evidence" value="ECO:0007669"/>
    <property type="project" value="UniProtKB-KW"/>
</dbReference>
<dbReference type="GO" id="GO:0005524">
    <property type="term" value="F:ATP binding"/>
    <property type="evidence" value="ECO:0007669"/>
    <property type="project" value="UniProtKB-UniRule"/>
</dbReference>
<dbReference type="GO" id="GO:0046933">
    <property type="term" value="F:proton-transporting ATP synthase activity, rotational mechanism"/>
    <property type="evidence" value="ECO:0007669"/>
    <property type="project" value="UniProtKB-UniRule"/>
</dbReference>
<dbReference type="GO" id="GO:0042777">
    <property type="term" value="P:proton motive force-driven plasma membrane ATP synthesis"/>
    <property type="evidence" value="ECO:0007669"/>
    <property type="project" value="UniProtKB-UniRule"/>
</dbReference>
<dbReference type="CDD" id="cd12151">
    <property type="entry name" value="F1-ATPase_gamma"/>
    <property type="match status" value="1"/>
</dbReference>
<dbReference type="FunFam" id="3.40.1380.10:FF:000010">
    <property type="entry name" value="ATP synthase gamma chain"/>
    <property type="match status" value="1"/>
</dbReference>
<dbReference type="Gene3D" id="3.40.1380.10">
    <property type="match status" value="1"/>
</dbReference>
<dbReference type="Gene3D" id="1.10.287.80">
    <property type="entry name" value="ATP synthase, gamma subunit, helix hairpin domain"/>
    <property type="match status" value="1"/>
</dbReference>
<dbReference type="HAMAP" id="MF_00815">
    <property type="entry name" value="ATP_synth_gamma_bact"/>
    <property type="match status" value="1"/>
</dbReference>
<dbReference type="InterPro" id="IPR035968">
    <property type="entry name" value="ATP_synth_F1_ATPase_gsu"/>
</dbReference>
<dbReference type="InterPro" id="IPR000131">
    <property type="entry name" value="ATP_synth_F1_gsu"/>
</dbReference>
<dbReference type="InterPro" id="IPR023632">
    <property type="entry name" value="ATP_synth_F1_gsu_CS"/>
</dbReference>
<dbReference type="NCBIfam" id="TIGR01146">
    <property type="entry name" value="ATPsyn_F1gamma"/>
    <property type="match status" value="1"/>
</dbReference>
<dbReference type="NCBIfam" id="NF004145">
    <property type="entry name" value="PRK05621.1-2"/>
    <property type="match status" value="1"/>
</dbReference>
<dbReference type="PANTHER" id="PTHR11693">
    <property type="entry name" value="ATP SYNTHASE GAMMA CHAIN"/>
    <property type="match status" value="1"/>
</dbReference>
<dbReference type="PANTHER" id="PTHR11693:SF22">
    <property type="entry name" value="ATP SYNTHASE SUBUNIT GAMMA, MITOCHONDRIAL"/>
    <property type="match status" value="1"/>
</dbReference>
<dbReference type="Pfam" id="PF00231">
    <property type="entry name" value="ATP-synt"/>
    <property type="match status" value="1"/>
</dbReference>
<dbReference type="PRINTS" id="PR00126">
    <property type="entry name" value="ATPASEGAMMA"/>
</dbReference>
<dbReference type="SUPFAM" id="SSF52943">
    <property type="entry name" value="ATP synthase (F1-ATPase), gamma subunit"/>
    <property type="match status" value="1"/>
</dbReference>
<dbReference type="PROSITE" id="PS00153">
    <property type="entry name" value="ATPASE_GAMMA"/>
    <property type="match status" value="1"/>
</dbReference>
<feature type="chain" id="PRO_0000426903" description="ATP synthase gamma chain">
    <location>
        <begin position="1"/>
        <end position="305"/>
    </location>
</feature>
<reference key="1">
    <citation type="journal article" date="2002" name="J. Bacteriol.">
        <title>Whole-genome comparison of Mycobacterium tuberculosis clinical and laboratory strains.</title>
        <authorList>
            <person name="Fleischmann R.D."/>
            <person name="Alland D."/>
            <person name="Eisen J.A."/>
            <person name="Carpenter L."/>
            <person name="White O."/>
            <person name="Peterson J.D."/>
            <person name="DeBoy R.T."/>
            <person name="Dodson R.J."/>
            <person name="Gwinn M.L."/>
            <person name="Haft D.H."/>
            <person name="Hickey E.K."/>
            <person name="Kolonay J.F."/>
            <person name="Nelson W.C."/>
            <person name="Umayam L.A."/>
            <person name="Ermolaeva M.D."/>
            <person name="Salzberg S.L."/>
            <person name="Delcher A."/>
            <person name="Utterback T.R."/>
            <person name="Weidman J.F."/>
            <person name="Khouri H.M."/>
            <person name="Gill J."/>
            <person name="Mikula A."/>
            <person name="Bishai W."/>
            <person name="Jacobs W.R. Jr."/>
            <person name="Venter J.C."/>
            <person name="Fraser C.M."/>
        </authorList>
    </citation>
    <scope>NUCLEOTIDE SEQUENCE [LARGE SCALE GENOMIC DNA]</scope>
    <source>
        <strain>CDC 1551 / Oshkosh</strain>
    </source>
</reference>
<name>ATPG_MYCTO</name>
<comment type="function">
    <text evidence="1">Produces ATP from ADP in the presence of a proton gradient across the membrane. The gamma chain is believed to be important in regulating ATPase activity and the flow of protons through the CF(0) complex.</text>
</comment>
<comment type="subunit">
    <text evidence="1">F-type ATPases have 2 components, CF(1) - the catalytic core - and CF(0) - the membrane proton channel. CF(1) has five subunits: alpha(3), beta(3), gamma(1), delta(1), epsilon(1). CF(0) has three main subunits: a, b and c.</text>
</comment>
<comment type="subcellular location">
    <subcellularLocation>
        <location evidence="1">Cell membrane</location>
        <topology evidence="1">Peripheral membrane protein</topology>
    </subcellularLocation>
</comment>
<comment type="similarity">
    <text evidence="1">Belongs to the ATPase gamma chain family.</text>
</comment>
<keyword id="KW-0066">ATP synthesis</keyword>
<keyword id="KW-1003">Cell membrane</keyword>
<keyword id="KW-0139">CF(1)</keyword>
<keyword id="KW-0375">Hydrogen ion transport</keyword>
<keyword id="KW-0406">Ion transport</keyword>
<keyword id="KW-0472">Membrane</keyword>
<keyword id="KW-1185">Reference proteome</keyword>
<keyword id="KW-0813">Transport</keyword>
<evidence type="ECO:0000255" key="1">
    <source>
        <dbReference type="HAMAP-Rule" id="MF_00815"/>
    </source>
</evidence>
<proteinExistence type="inferred from homology"/>
<sequence>MAATLRELRGRIRSAGSIKKITKAQELIATSRIARAQARLESARPYAFEITRMLTTLAAEAALDHPLLVERPEPKRAGVLVVSSDRGLCGAYNANIFRRSEELFSLLREAGKQPVLYVVGRKAQNYYSFRNWNITESWMGFSEQPTYENAAEIASTLVDAFLLGTDNGEDQRSDSGEGVDELHIVYTEFKSMLSQSAEAHRIAPMVVEYVEEDIGPRTLYSFEPDATMLFESLLPRYLTTRVYAALLESAASELASRQRAMKSATDNADDLIKALTLMANRERQAQITQEISEIVGGANALAEAR</sequence>
<organism>
    <name type="scientific">Mycobacterium tuberculosis (strain CDC 1551 / Oshkosh)</name>
    <dbReference type="NCBI Taxonomy" id="83331"/>
    <lineage>
        <taxon>Bacteria</taxon>
        <taxon>Bacillati</taxon>
        <taxon>Actinomycetota</taxon>
        <taxon>Actinomycetes</taxon>
        <taxon>Mycobacteriales</taxon>
        <taxon>Mycobacteriaceae</taxon>
        <taxon>Mycobacterium</taxon>
        <taxon>Mycobacterium tuberculosis complex</taxon>
    </lineage>
</organism>